<organism>
    <name type="scientific">Mus musculus</name>
    <name type="common">Mouse</name>
    <dbReference type="NCBI Taxonomy" id="10090"/>
    <lineage>
        <taxon>Eukaryota</taxon>
        <taxon>Metazoa</taxon>
        <taxon>Chordata</taxon>
        <taxon>Craniata</taxon>
        <taxon>Vertebrata</taxon>
        <taxon>Euteleostomi</taxon>
        <taxon>Mammalia</taxon>
        <taxon>Eutheria</taxon>
        <taxon>Euarchontoglires</taxon>
        <taxon>Glires</taxon>
        <taxon>Rodentia</taxon>
        <taxon>Myomorpha</taxon>
        <taxon>Muroidea</taxon>
        <taxon>Muridae</taxon>
        <taxon>Murinae</taxon>
        <taxon>Mus</taxon>
        <taxon>Mus</taxon>
    </lineage>
</organism>
<proteinExistence type="evidence at transcript level"/>
<feature type="chain" id="PRO_0000297628" description="HUWE1-associated protein modifying stress responses">
    <location>
        <begin position="1"/>
        <end position="275"/>
    </location>
</feature>
<feature type="region of interest" description="Disordered" evidence="2">
    <location>
        <begin position="32"/>
        <end position="51"/>
    </location>
</feature>
<feature type="region of interest" description="Disordered" evidence="2">
    <location>
        <begin position="155"/>
        <end position="181"/>
    </location>
</feature>
<feature type="region of interest" description="Disordered" evidence="2">
    <location>
        <begin position="204"/>
        <end position="228"/>
    </location>
</feature>
<feature type="region of interest" description="Disordered" evidence="2">
    <location>
        <begin position="250"/>
        <end position="275"/>
    </location>
</feature>
<feature type="compositionally biased region" description="Acidic residues" evidence="2">
    <location>
        <begin position="32"/>
        <end position="44"/>
    </location>
</feature>
<feature type="compositionally biased region" description="Low complexity" evidence="2">
    <location>
        <begin position="172"/>
        <end position="181"/>
    </location>
</feature>
<feature type="compositionally biased region" description="Polar residues" evidence="2">
    <location>
        <begin position="204"/>
        <end position="221"/>
    </location>
</feature>
<feature type="modified residue" description="Phosphoserine" evidence="1">
    <location>
        <position position="167"/>
    </location>
</feature>
<feature type="modified residue" description="Phosphoserine" evidence="1">
    <location>
        <position position="212"/>
    </location>
</feature>
<feature type="sequence conflict" description="In Ref. 1; BAB25061." evidence="3" ref="1">
    <original>R</original>
    <variation>Q</variation>
    <location>
        <position position="224"/>
    </location>
</feature>
<name>HAPR1_MOUSE</name>
<dbReference type="EMBL" id="AK007485">
    <property type="protein sequence ID" value="BAB25061.1"/>
    <property type="status" value="ALT_FRAME"/>
    <property type="molecule type" value="mRNA"/>
</dbReference>
<dbReference type="EMBL" id="BC116778">
    <property type="protein sequence ID" value="AAI16779.1"/>
    <property type="molecule type" value="mRNA"/>
</dbReference>
<dbReference type="EMBL" id="BC116780">
    <property type="protein sequence ID" value="AAI16781.1"/>
    <property type="molecule type" value="mRNA"/>
</dbReference>
<dbReference type="CCDS" id="CCDS49756.1"/>
<dbReference type="RefSeq" id="NP_001074869.1">
    <property type="nucleotide sequence ID" value="NM_001081400.3"/>
</dbReference>
<dbReference type="FunCoup" id="Q14AM7">
    <property type="interactions" value="3779"/>
</dbReference>
<dbReference type="STRING" id="10090.ENSMUSP00000023150"/>
<dbReference type="iPTMnet" id="Q14AM7"/>
<dbReference type="PhosphoSitePlus" id="Q14AM7"/>
<dbReference type="PaxDb" id="10090-ENSMUSP00000023150"/>
<dbReference type="PeptideAtlas" id="Q14AM7"/>
<dbReference type="Antibodypedia" id="52099">
    <property type="antibodies" value="145 antibodies from 16 providers"/>
</dbReference>
<dbReference type="Ensembl" id="ENSMUST00000023150.7">
    <property type="protein sequence ID" value="ENSMUSP00000023150.6"/>
    <property type="gene ID" value="ENSMUSG00000022507.7"/>
</dbReference>
<dbReference type="GeneID" id="69053"/>
<dbReference type="KEGG" id="mmu:69053"/>
<dbReference type="UCSC" id="uc007yda.2">
    <property type="organism name" value="mouse"/>
</dbReference>
<dbReference type="AGR" id="MGI:1916303"/>
<dbReference type="CTD" id="29035"/>
<dbReference type="MGI" id="MGI:1916303">
    <property type="gene designation" value="Hapstr1"/>
</dbReference>
<dbReference type="VEuPathDB" id="HostDB:ENSMUSG00000022507"/>
<dbReference type="eggNOG" id="ENOG502QPPE">
    <property type="taxonomic scope" value="Eukaryota"/>
</dbReference>
<dbReference type="GeneTree" id="ENSGT00390000002886"/>
<dbReference type="HOGENOM" id="CLU_081329_0_0_1"/>
<dbReference type="InParanoid" id="Q14AM7"/>
<dbReference type="OMA" id="NSFEEEC"/>
<dbReference type="OrthoDB" id="5823474at2759"/>
<dbReference type="PhylomeDB" id="Q14AM7"/>
<dbReference type="TreeFam" id="TF323292"/>
<dbReference type="BioGRID-ORCS" id="69053">
    <property type="hits" value="21 hits in 77 CRISPR screens"/>
</dbReference>
<dbReference type="PRO" id="PR:Q14AM7"/>
<dbReference type="Proteomes" id="UP000000589">
    <property type="component" value="Chromosome 16"/>
</dbReference>
<dbReference type="RNAct" id="Q14AM7">
    <property type="molecule type" value="protein"/>
</dbReference>
<dbReference type="Bgee" id="ENSMUSG00000022507">
    <property type="expression patterns" value="Expressed in otolith organ and 231 other cell types or tissues"/>
</dbReference>
<dbReference type="ExpressionAtlas" id="Q14AM7">
    <property type="expression patterns" value="baseline and differential"/>
</dbReference>
<dbReference type="GO" id="GO:0005737">
    <property type="term" value="C:cytoplasm"/>
    <property type="evidence" value="ECO:0000250"/>
    <property type="project" value="UniProtKB"/>
</dbReference>
<dbReference type="GO" id="GO:0005634">
    <property type="term" value="C:nucleus"/>
    <property type="evidence" value="ECO:0000250"/>
    <property type="project" value="UniProtKB"/>
</dbReference>
<dbReference type="GO" id="GO:0031625">
    <property type="term" value="F:ubiquitin protein ligase binding"/>
    <property type="evidence" value="ECO:0007669"/>
    <property type="project" value="Ensembl"/>
</dbReference>
<dbReference type="GO" id="GO:1901797">
    <property type="term" value="P:negative regulation of signal transduction by p53 class mediator"/>
    <property type="evidence" value="ECO:0000250"/>
    <property type="project" value="UniProtKB"/>
</dbReference>
<dbReference type="GO" id="GO:0080135">
    <property type="term" value="P:regulation of cellular response to stress"/>
    <property type="evidence" value="ECO:0000250"/>
    <property type="project" value="UniProtKB"/>
</dbReference>
<dbReference type="InterPro" id="IPR040308">
    <property type="entry name" value="HAPR1"/>
</dbReference>
<dbReference type="InterPro" id="IPR029196">
    <property type="entry name" value="HAPSTR1-like"/>
</dbReference>
<dbReference type="PANTHER" id="PTHR31624:SF3">
    <property type="entry name" value="HUWE1-ASSOCIATED PROTEIN MODIFYING STRESS RESPONSES 1"/>
    <property type="match status" value="1"/>
</dbReference>
<dbReference type="PANTHER" id="PTHR31624">
    <property type="entry name" value="UPF0472 PROTEIN C16ORF72"/>
    <property type="match status" value="1"/>
</dbReference>
<dbReference type="Pfam" id="PF15251">
    <property type="entry name" value="TAPR1-like"/>
    <property type="match status" value="1"/>
</dbReference>
<reference key="1">
    <citation type="journal article" date="2005" name="Science">
        <title>The transcriptional landscape of the mammalian genome.</title>
        <authorList>
            <person name="Carninci P."/>
            <person name="Kasukawa T."/>
            <person name="Katayama S."/>
            <person name="Gough J."/>
            <person name="Frith M.C."/>
            <person name="Maeda N."/>
            <person name="Oyama R."/>
            <person name="Ravasi T."/>
            <person name="Lenhard B."/>
            <person name="Wells C."/>
            <person name="Kodzius R."/>
            <person name="Shimokawa K."/>
            <person name="Bajic V.B."/>
            <person name="Brenner S.E."/>
            <person name="Batalov S."/>
            <person name="Forrest A.R."/>
            <person name="Zavolan M."/>
            <person name="Davis M.J."/>
            <person name="Wilming L.G."/>
            <person name="Aidinis V."/>
            <person name="Allen J.E."/>
            <person name="Ambesi-Impiombato A."/>
            <person name="Apweiler R."/>
            <person name="Aturaliya R.N."/>
            <person name="Bailey T.L."/>
            <person name="Bansal M."/>
            <person name="Baxter L."/>
            <person name="Beisel K.W."/>
            <person name="Bersano T."/>
            <person name="Bono H."/>
            <person name="Chalk A.M."/>
            <person name="Chiu K.P."/>
            <person name="Choudhary V."/>
            <person name="Christoffels A."/>
            <person name="Clutterbuck D.R."/>
            <person name="Crowe M.L."/>
            <person name="Dalla E."/>
            <person name="Dalrymple B.P."/>
            <person name="de Bono B."/>
            <person name="Della Gatta G."/>
            <person name="di Bernardo D."/>
            <person name="Down T."/>
            <person name="Engstrom P."/>
            <person name="Fagiolini M."/>
            <person name="Faulkner G."/>
            <person name="Fletcher C.F."/>
            <person name="Fukushima T."/>
            <person name="Furuno M."/>
            <person name="Futaki S."/>
            <person name="Gariboldi M."/>
            <person name="Georgii-Hemming P."/>
            <person name="Gingeras T.R."/>
            <person name="Gojobori T."/>
            <person name="Green R.E."/>
            <person name="Gustincich S."/>
            <person name="Harbers M."/>
            <person name="Hayashi Y."/>
            <person name="Hensch T.K."/>
            <person name="Hirokawa N."/>
            <person name="Hill D."/>
            <person name="Huminiecki L."/>
            <person name="Iacono M."/>
            <person name="Ikeo K."/>
            <person name="Iwama A."/>
            <person name="Ishikawa T."/>
            <person name="Jakt M."/>
            <person name="Kanapin A."/>
            <person name="Katoh M."/>
            <person name="Kawasawa Y."/>
            <person name="Kelso J."/>
            <person name="Kitamura H."/>
            <person name="Kitano H."/>
            <person name="Kollias G."/>
            <person name="Krishnan S.P."/>
            <person name="Kruger A."/>
            <person name="Kummerfeld S.K."/>
            <person name="Kurochkin I.V."/>
            <person name="Lareau L.F."/>
            <person name="Lazarevic D."/>
            <person name="Lipovich L."/>
            <person name="Liu J."/>
            <person name="Liuni S."/>
            <person name="McWilliam S."/>
            <person name="Madan Babu M."/>
            <person name="Madera M."/>
            <person name="Marchionni L."/>
            <person name="Matsuda H."/>
            <person name="Matsuzawa S."/>
            <person name="Miki H."/>
            <person name="Mignone F."/>
            <person name="Miyake S."/>
            <person name="Morris K."/>
            <person name="Mottagui-Tabar S."/>
            <person name="Mulder N."/>
            <person name="Nakano N."/>
            <person name="Nakauchi H."/>
            <person name="Ng P."/>
            <person name="Nilsson R."/>
            <person name="Nishiguchi S."/>
            <person name="Nishikawa S."/>
            <person name="Nori F."/>
            <person name="Ohara O."/>
            <person name="Okazaki Y."/>
            <person name="Orlando V."/>
            <person name="Pang K.C."/>
            <person name="Pavan W.J."/>
            <person name="Pavesi G."/>
            <person name="Pesole G."/>
            <person name="Petrovsky N."/>
            <person name="Piazza S."/>
            <person name="Reed J."/>
            <person name="Reid J.F."/>
            <person name="Ring B.Z."/>
            <person name="Ringwald M."/>
            <person name="Rost B."/>
            <person name="Ruan Y."/>
            <person name="Salzberg S.L."/>
            <person name="Sandelin A."/>
            <person name="Schneider C."/>
            <person name="Schoenbach C."/>
            <person name="Sekiguchi K."/>
            <person name="Semple C.A."/>
            <person name="Seno S."/>
            <person name="Sessa L."/>
            <person name="Sheng Y."/>
            <person name="Shibata Y."/>
            <person name="Shimada H."/>
            <person name="Shimada K."/>
            <person name="Silva D."/>
            <person name="Sinclair B."/>
            <person name="Sperling S."/>
            <person name="Stupka E."/>
            <person name="Sugiura K."/>
            <person name="Sultana R."/>
            <person name="Takenaka Y."/>
            <person name="Taki K."/>
            <person name="Tammoja K."/>
            <person name="Tan S.L."/>
            <person name="Tang S."/>
            <person name="Taylor M.S."/>
            <person name="Tegner J."/>
            <person name="Teichmann S.A."/>
            <person name="Ueda H.R."/>
            <person name="van Nimwegen E."/>
            <person name="Verardo R."/>
            <person name="Wei C.L."/>
            <person name="Yagi K."/>
            <person name="Yamanishi H."/>
            <person name="Zabarovsky E."/>
            <person name="Zhu S."/>
            <person name="Zimmer A."/>
            <person name="Hide W."/>
            <person name="Bult C."/>
            <person name="Grimmond S.M."/>
            <person name="Teasdale R.D."/>
            <person name="Liu E.T."/>
            <person name="Brusic V."/>
            <person name="Quackenbush J."/>
            <person name="Wahlestedt C."/>
            <person name="Mattick J.S."/>
            <person name="Hume D.A."/>
            <person name="Kai C."/>
            <person name="Sasaki D."/>
            <person name="Tomaru Y."/>
            <person name="Fukuda S."/>
            <person name="Kanamori-Katayama M."/>
            <person name="Suzuki M."/>
            <person name="Aoki J."/>
            <person name="Arakawa T."/>
            <person name="Iida J."/>
            <person name="Imamura K."/>
            <person name="Itoh M."/>
            <person name="Kato T."/>
            <person name="Kawaji H."/>
            <person name="Kawagashira N."/>
            <person name="Kawashima T."/>
            <person name="Kojima M."/>
            <person name="Kondo S."/>
            <person name="Konno H."/>
            <person name="Nakano K."/>
            <person name="Ninomiya N."/>
            <person name="Nishio T."/>
            <person name="Okada M."/>
            <person name="Plessy C."/>
            <person name="Shibata K."/>
            <person name="Shiraki T."/>
            <person name="Suzuki S."/>
            <person name="Tagami M."/>
            <person name="Waki K."/>
            <person name="Watahiki A."/>
            <person name="Okamura-Oho Y."/>
            <person name="Suzuki H."/>
            <person name="Kawai J."/>
            <person name="Hayashizaki Y."/>
        </authorList>
    </citation>
    <scope>NUCLEOTIDE SEQUENCE [LARGE SCALE MRNA]</scope>
    <source>
        <strain>C57BL/6J</strain>
        <tissue>Pancreas</tissue>
    </source>
</reference>
<reference key="2">
    <citation type="journal article" date="2004" name="Genome Res.">
        <title>The status, quality, and expansion of the NIH full-length cDNA project: the Mammalian Gene Collection (MGC).</title>
        <authorList>
            <consortium name="The MGC Project Team"/>
        </authorList>
    </citation>
    <scope>NUCLEOTIDE SEQUENCE [LARGE SCALE MRNA]</scope>
    <source>
        <tissue>Brain</tissue>
    </source>
</reference>
<sequence length="275" mass="30940">MEERKEEGEAEIQEHGPEHWFSKWERQCLAEAEQDEQLSPELQEEAAAAAQPEHKQQKLWHLFQNSATAVAQLYKDRVCQQPGLSLWVPFQNAATAVTNLYKESVDTHQRSFDIGIQIGYQRRNKDVLAWVKKRRRTIRREDLISFLCGKVPPPRNSRAPPRLTVVSPNRATSTETSSSVETDLQPFREAIALHGLSGAMASISVRSSTPGSPTHVSSGPNASRRRNGLHDVDLNTFITEEMALHLDNGGTRKRTSAQCGDVITDSPTHKRNRML</sequence>
<keyword id="KW-0963">Cytoplasm</keyword>
<keyword id="KW-0539">Nucleus</keyword>
<keyword id="KW-0597">Phosphoprotein</keyword>
<keyword id="KW-1185">Reference proteome</keyword>
<keyword id="KW-0346">Stress response</keyword>
<keyword id="KW-0832">Ubl conjugation</keyword>
<gene>
    <name evidence="4" type="primary">Hapstr1</name>
</gene>
<accession>Q14AM7</accession>
<accession>Q9D905</accession>
<evidence type="ECO:0000250" key="1">
    <source>
        <dbReference type="UniProtKB" id="Q14CZ0"/>
    </source>
</evidence>
<evidence type="ECO:0000256" key="2">
    <source>
        <dbReference type="SAM" id="MobiDB-lite"/>
    </source>
</evidence>
<evidence type="ECO:0000305" key="3"/>
<evidence type="ECO:0000312" key="4">
    <source>
        <dbReference type="MGI" id="MGI:1916303"/>
    </source>
</evidence>
<comment type="function">
    <text evidence="1">Acts as a central player within a network of stress response pathways promoting cellular adaptability. The E3 ligase HUWE1 assists HAPSTR1 in controlling stress signaling and in turn, HUWE1 feeds back to promote the degradation of HAPSTR1. HAPSTR1 represents a central coordination mechanism for stress response programs. Functions as a negative regulator of TP53/P53 in the cellular response to telomere erosion and probably also DNA damage. May attenuate p53/TP53 activation through the E3 ubiquitin ligase HUWE1.</text>
</comment>
<comment type="subunit">
    <text evidence="1">Homooligomer. Heterooligomer with HAPSTR2; the interaction is direct and stabilizes HAPSTR1. Interacts with HUWE1.</text>
</comment>
<comment type="subcellular location">
    <subcellularLocation>
        <location evidence="1">Nucleus</location>
    </subcellularLocation>
    <subcellularLocation>
        <location evidence="1">Cytoplasm</location>
    </subcellularLocation>
</comment>
<comment type="PTM">
    <text evidence="1">Ubiquitinated by HUWE1. Promotes HAPSTR1 degradation through polyubiquitination.</text>
</comment>
<comment type="similarity">
    <text evidence="3">Belongs to the HAPSTR1 family.</text>
</comment>
<comment type="sequence caution" evidence="3">
    <conflict type="frameshift">
        <sequence resource="EMBL-CDS" id="BAB25061"/>
    </conflict>
</comment>
<protein>
    <recommendedName>
        <fullName evidence="3">HUWE1-associated protein modifying stress responses</fullName>
    </recommendedName>
</protein>